<reference key="1">
    <citation type="submission" date="2006-09" db="EMBL/GenBank/DDBJ databases">
        <title>Complete sequence of Rhodopseudomonas palustris BisA53.</title>
        <authorList>
            <consortium name="US DOE Joint Genome Institute"/>
            <person name="Copeland A."/>
            <person name="Lucas S."/>
            <person name="Lapidus A."/>
            <person name="Barry K."/>
            <person name="Detter J.C."/>
            <person name="Glavina del Rio T."/>
            <person name="Hammon N."/>
            <person name="Israni S."/>
            <person name="Dalin E."/>
            <person name="Tice H."/>
            <person name="Pitluck S."/>
            <person name="Chain P."/>
            <person name="Malfatti S."/>
            <person name="Shin M."/>
            <person name="Vergez L."/>
            <person name="Schmutz J."/>
            <person name="Larimer F."/>
            <person name="Land M."/>
            <person name="Hauser L."/>
            <person name="Pelletier D.A."/>
            <person name="Kyrpides N."/>
            <person name="Kim E."/>
            <person name="Harwood C.S."/>
            <person name="Oda Y."/>
            <person name="Richardson P."/>
        </authorList>
    </citation>
    <scope>NUCLEOTIDE SEQUENCE [LARGE SCALE GENOMIC DNA]</scope>
    <source>
        <strain>BisA53</strain>
    </source>
</reference>
<comment type="function">
    <text evidence="1">Required for maturation of urease via the functional incorporation of the urease nickel metallocenter.</text>
</comment>
<comment type="subunit">
    <text evidence="1">UreD, UreF and UreG form a complex that acts as a GTP-hydrolysis-dependent molecular chaperone, activating the urease apoprotein by helping to assemble the nickel containing metallocenter of UreC. The UreE protein probably delivers the nickel.</text>
</comment>
<comment type="subcellular location">
    <subcellularLocation>
        <location evidence="1">Cytoplasm</location>
    </subcellularLocation>
</comment>
<comment type="similarity">
    <text evidence="1">Belongs to the UreF family.</text>
</comment>
<keyword id="KW-0143">Chaperone</keyword>
<keyword id="KW-0963">Cytoplasm</keyword>
<keyword id="KW-0996">Nickel insertion</keyword>
<evidence type="ECO:0000255" key="1">
    <source>
        <dbReference type="HAMAP-Rule" id="MF_01385"/>
    </source>
</evidence>
<organism>
    <name type="scientific">Rhodopseudomonas palustris (strain BisA53)</name>
    <dbReference type="NCBI Taxonomy" id="316055"/>
    <lineage>
        <taxon>Bacteria</taxon>
        <taxon>Pseudomonadati</taxon>
        <taxon>Pseudomonadota</taxon>
        <taxon>Alphaproteobacteria</taxon>
        <taxon>Hyphomicrobiales</taxon>
        <taxon>Nitrobacteraceae</taxon>
        <taxon>Rhodopseudomonas</taxon>
    </lineage>
</organism>
<protein>
    <recommendedName>
        <fullName evidence="1">Urease accessory protein UreF</fullName>
    </recommendedName>
</protein>
<feature type="chain" id="PRO_5000133811" description="Urease accessory protein UreF">
    <location>
        <begin position="1"/>
        <end position="238"/>
    </location>
</feature>
<accession>Q07K76</accession>
<gene>
    <name evidence="1" type="primary">ureF</name>
    <name type="ordered locus">RPE_3729</name>
</gene>
<sequence>MTDATDPGALSAALAAALYRLMTWLSPSFPVGAFAYSSGLEWAVEAGDIKDAATLTDWLSAMLSDGAGFCDGVVLAQAYRAASAGDDARLRAVADLACAMVPSRERHLETTTQGRAFVEIASHAWSSARLPPAIAACGGAMAYPVAVGIVSAAHEVPLAAVLHAFLHALVSNWISAAARLVPLGQTDSQRVLAALEPVVAPTAARALAASLDDLGSATFRADLASLRHESQYTRLFRS</sequence>
<dbReference type="EMBL" id="CP000463">
    <property type="protein sequence ID" value="ABJ07658.1"/>
    <property type="molecule type" value="Genomic_DNA"/>
</dbReference>
<dbReference type="SMR" id="Q07K76"/>
<dbReference type="STRING" id="316055.RPE_3729"/>
<dbReference type="KEGG" id="rpe:RPE_3729"/>
<dbReference type="eggNOG" id="COG0830">
    <property type="taxonomic scope" value="Bacteria"/>
</dbReference>
<dbReference type="HOGENOM" id="CLU_049215_2_0_5"/>
<dbReference type="OrthoDB" id="9798772at2"/>
<dbReference type="GO" id="GO:0005737">
    <property type="term" value="C:cytoplasm"/>
    <property type="evidence" value="ECO:0007669"/>
    <property type="project" value="UniProtKB-SubCell"/>
</dbReference>
<dbReference type="GO" id="GO:0016151">
    <property type="term" value="F:nickel cation binding"/>
    <property type="evidence" value="ECO:0007669"/>
    <property type="project" value="UniProtKB-UniRule"/>
</dbReference>
<dbReference type="Gene3D" id="1.10.4190.10">
    <property type="entry name" value="Urease accessory protein UreF"/>
    <property type="match status" value="1"/>
</dbReference>
<dbReference type="HAMAP" id="MF_01385">
    <property type="entry name" value="UreF"/>
    <property type="match status" value="1"/>
</dbReference>
<dbReference type="InterPro" id="IPR002639">
    <property type="entry name" value="UreF"/>
</dbReference>
<dbReference type="InterPro" id="IPR038277">
    <property type="entry name" value="UreF_sf"/>
</dbReference>
<dbReference type="PANTHER" id="PTHR33620">
    <property type="entry name" value="UREASE ACCESSORY PROTEIN F"/>
    <property type="match status" value="1"/>
</dbReference>
<dbReference type="PANTHER" id="PTHR33620:SF1">
    <property type="entry name" value="UREASE ACCESSORY PROTEIN F"/>
    <property type="match status" value="1"/>
</dbReference>
<dbReference type="Pfam" id="PF01730">
    <property type="entry name" value="UreF"/>
    <property type="match status" value="1"/>
</dbReference>
<dbReference type="PIRSF" id="PIRSF009467">
    <property type="entry name" value="Ureas_acces_UreF"/>
    <property type="match status" value="1"/>
</dbReference>
<name>UREF_RHOP5</name>
<proteinExistence type="inferred from homology"/>